<evidence type="ECO:0000255" key="1">
    <source>
        <dbReference type="HAMAP-Rule" id="MF_00502"/>
    </source>
</evidence>
<evidence type="ECO:0000256" key="2">
    <source>
        <dbReference type="SAM" id="MobiDB-lite"/>
    </source>
</evidence>
<evidence type="ECO:0000305" key="3"/>
<feature type="chain" id="PRO_0000173215" description="Large ribosomal subunit protein bL31B">
    <location>
        <begin position="1"/>
        <end position="108"/>
    </location>
</feature>
<feature type="region of interest" description="Disordered" evidence="2">
    <location>
        <begin position="81"/>
        <end position="108"/>
    </location>
</feature>
<feature type="compositionally biased region" description="Basic residues" evidence="2">
    <location>
        <begin position="97"/>
        <end position="108"/>
    </location>
</feature>
<sequence length="108" mass="12041">MKKNTHPEYNKVLFVDSSTGYKFVCGSTYQSDKTEVYEGQEYPVCYVSVSSSSHPFFTGSKRLVDAEGRVDKFLKRYSNAKPAQPVQAPAEEGPVVKGKKKAPAKKKK</sequence>
<comment type="subunit">
    <text evidence="1">Part of the 50S ribosomal subunit.</text>
</comment>
<comment type="similarity">
    <text evidence="1">Belongs to the bacterial ribosomal protein bL31 family. Type B subfamily.</text>
</comment>
<protein>
    <recommendedName>
        <fullName evidence="1">Large ribosomal subunit protein bL31B</fullName>
    </recommendedName>
    <alternativeName>
        <fullName evidence="3">50S ribosomal protein L31 type B</fullName>
    </alternativeName>
</protein>
<dbReference type="EMBL" id="AE015925">
    <property type="protein sequence ID" value="AAP05403.1"/>
    <property type="molecule type" value="Genomic_DNA"/>
</dbReference>
<dbReference type="RefSeq" id="WP_011006618.1">
    <property type="nucleotide sequence ID" value="NC_003361.3"/>
</dbReference>
<dbReference type="SMR" id="Q822M1"/>
<dbReference type="STRING" id="227941.CCA_00661"/>
<dbReference type="KEGG" id="cca:CCA_00661"/>
<dbReference type="eggNOG" id="COG0254">
    <property type="taxonomic scope" value="Bacteria"/>
</dbReference>
<dbReference type="HOGENOM" id="CLU_114306_2_0_0"/>
<dbReference type="OrthoDB" id="9803251at2"/>
<dbReference type="Proteomes" id="UP000002193">
    <property type="component" value="Chromosome"/>
</dbReference>
<dbReference type="GO" id="GO:1990904">
    <property type="term" value="C:ribonucleoprotein complex"/>
    <property type="evidence" value="ECO:0007669"/>
    <property type="project" value="UniProtKB-KW"/>
</dbReference>
<dbReference type="GO" id="GO:0005840">
    <property type="term" value="C:ribosome"/>
    <property type="evidence" value="ECO:0007669"/>
    <property type="project" value="UniProtKB-KW"/>
</dbReference>
<dbReference type="GO" id="GO:0003735">
    <property type="term" value="F:structural constituent of ribosome"/>
    <property type="evidence" value="ECO:0007669"/>
    <property type="project" value="InterPro"/>
</dbReference>
<dbReference type="GO" id="GO:0006412">
    <property type="term" value="P:translation"/>
    <property type="evidence" value="ECO:0007669"/>
    <property type="project" value="UniProtKB-UniRule"/>
</dbReference>
<dbReference type="Gene3D" id="4.10.830.30">
    <property type="entry name" value="Ribosomal protein L31"/>
    <property type="match status" value="1"/>
</dbReference>
<dbReference type="HAMAP" id="MF_00502">
    <property type="entry name" value="Ribosomal_bL31_2"/>
    <property type="match status" value="1"/>
</dbReference>
<dbReference type="InterPro" id="IPR034704">
    <property type="entry name" value="Ribosomal_bL28/bL31-like_sf"/>
</dbReference>
<dbReference type="InterPro" id="IPR002150">
    <property type="entry name" value="Ribosomal_bL31"/>
</dbReference>
<dbReference type="InterPro" id="IPR027493">
    <property type="entry name" value="Ribosomal_bL31_B"/>
</dbReference>
<dbReference type="InterPro" id="IPR042105">
    <property type="entry name" value="Ribosomal_bL31_sf"/>
</dbReference>
<dbReference type="NCBIfam" id="TIGR00105">
    <property type="entry name" value="L31"/>
    <property type="match status" value="1"/>
</dbReference>
<dbReference type="NCBIfam" id="NF002462">
    <property type="entry name" value="PRK01678.1"/>
    <property type="match status" value="1"/>
</dbReference>
<dbReference type="PANTHER" id="PTHR33280">
    <property type="entry name" value="50S RIBOSOMAL PROTEIN L31, CHLOROPLASTIC"/>
    <property type="match status" value="1"/>
</dbReference>
<dbReference type="PANTHER" id="PTHR33280:SF1">
    <property type="entry name" value="LARGE RIBOSOMAL SUBUNIT PROTEIN BL31C"/>
    <property type="match status" value="1"/>
</dbReference>
<dbReference type="Pfam" id="PF01197">
    <property type="entry name" value="Ribosomal_L31"/>
    <property type="match status" value="1"/>
</dbReference>
<dbReference type="PRINTS" id="PR01249">
    <property type="entry name" value="RIBOSOMALL31"/>
</dbReference>
<dbReference type="SUPFAM" id="SSF143800">
    <property type="entry name" value="L28p-like"/>
    <property type="match status" value="1"/>
</dbReference>
<dbReference type="PROSITE" id="PS01143">
    <property type="entry name" value="RIBOSOMAL_L31"/>
    <property type="match status" value="1"/>
</dbReference>
<keyword id="KW-0687">Ribonucleoprotein</keyword>
<keyword id="KW-0689">Ribosomal protein</keyword>
<proteinExistence type="inferred from homology"/>
<name>RL31B_CHLCV</name>
<gene>
    <name evidence="1" type="primary">rpmE2</name>
    <name type="synonym">rpmE</name>
    <name type="ordered locus">CCA_00661</name>
</gene>
<organism>
    <name type="scientific">Chlamydia caviae (strain ATCC VR-813 / DSM 19441 / 03DC25 / GPIC)</name>
    <name type="common">Chlamydophila caviae</name>
    <dbReference type="NCBI Taxonomy" id="227941"/>
    <lineage>
        <taxon>Bacteria</taxon>
        <taxon>Pseudomonadati</taxon>
        <taxon>Chlamydiota</taxon>
        <taxon>Chlamydiia</taxon>
        <taxon>Chlamydiales</taxon>
        <taxon>Chlamydiaceae</taxon>
        <taxon>Chlamydia/Chlamydophila group</taxon>
        <taxon>Chlamydia</taxon>
    </lineage>
</organism>
<reference key="1">
    <citation type="journal article" date="2003" name="Nucleic Acids Res.">
        <title>Genome sequence of Chlamydophila caviae (Chlamydia psittaci GPIC): examining the role of niche-specific genes in the evolution of the Chlamydiaceae.</title>
        <authorList>
            <person name="Read T.D."/>
            <person name="Myers G.S.A."/>
            <person name="Brunham R.C."/>
            <person name="Nelson W.C."/>
            <person name="Paulsen I.T."/>
            <person name="Heidelberg J.F."/>
            <person name="Holtzapple E.K."/>
            <person name="Khouri H.M."/>
            <person name="Federova N.B."/>
            <person name="Carty H.A."/>
            <person name="Umayam L.A."/>
            <person name="Haft D.H."/>
            <person name="Peterson J.D."/>
            <person name="Beanan M.J."/>
            <person name="White O."/>
            <person name="Salzberg S.L."/>
            <person name="Hsia R.-C."/>
            <person name="McClarty G."/>
            <person name="Rank R.G."/>
            <person name="Bavoil P.M."/>
            <person name="Fraser C.M."/>
        </authorList>
    </citation>
    <scope>NUCLEOTIDE SEQUENCE [LARGE SCALE GENOMIC DNA]</scope>
    <source>
        <strain>ATCC VR-813 / DSM 19441 / 03DC25 / GPIC</strain>
    </source>
</reference>
<accession>Q822M1</accession>